<name>STX1A_RAT</name>
<comment type="function">
    <text evidence="2 15 16 17 18 21 22 24 27 29">Plays an essential role in hormone and neurotransmitter calcium-dependent exocytosis and endocytosis (PubMed:17301173, PubMed:18167541, PubMed:20484665, PubMed:22411134, PubMed:28813412, PubMed:7901002). Part of the SNARE (Soluble NSF Attachment Receptor) complex composed of SNAP25, STX1A and VAMP2 which mediates the fusion of synaptic vesicles with the presynaptic plasma membrane (PubMed:14665625, PubMed:16888141, PubMed:19571812). STX1A and SNAP25 are localized on the plasma membrane while VAMP2 resides in synaptic vesicles. The pairing of the three SNAREs from the N-terminal SNARE motifs to the C-terminal anchors leads to the formation of the SNARE complex, which brings membranes into close proximity and results in final fusion (PubMed:14665625, PubMed:16888141, PubMed:19571812). Participates in the calcium-dependent regulation of acrosomal exocytosis in sperm (By similarity). Also plays an important role in the exocytosis of hormones such as insulin or glucagon-like peptide 1 (GLP-1) (By similarity).</text>
</comment>
<comment type="subunit">
    <text evidence="2 3 7 8 9 10 11 12 13 14 15 16 17 18 19 20 21 22 23 24 25 26 27 30 31">Part of the SNARE core complex containing SNAP25, VAMP2 and STX1A; this complex constitutes the basic catalytic machinery of the complex neurotransmitter release apparatus (PubMed:11533035, PubMed:11832227, PubMed:12496247, PubMed:14665625, PubMed:16888141, PubMed:18337752, PubMed:19196426, PubMed:19571812, PubMed:21785414, PubMed:26280336, PubMed:28813412, PubMed:9759724). The SNARE complex interacts with CPLX1 (PubMed:21785414, PubMed:28813412). Interacts with STXBP1 (PubMed:10746715, PubMed:12730201, PubMed:18337752). The interaction with STXBP1 promotes assembly of the SNARE complex (By similarity). Interacts (via C-terminus) with KCNB1 (via C-terminus); the interaction increases in a calcium-dependent manner and induces a pore-independent enhancement of exocytosis in neuroendocrine cells, chromaffin cells, pancreatic beta cells and from the soma of dorsal root ganglia (DRG) neurons (PubMed:17301173, PubMed:18167541, PubMed:20484665, PubMed:22411134). Interacts with SYTL4 (By similarity). Interacts with STXBP6 (PubMed:12145319). Interacts with PLCL1 (via C2 domain) (PubMed:23341457). Interacts with OTOF (By similarity). Interacts with LGI3 (By similarity). Interacts (via the H3 domain) with SLC6A4 (via the N-terminus); this interaction regulates SLC4A6 channel conductance in thalamocortical neurons (PubMed:11709063, PubMed:14642278). Interacts with SYT6 and SYT8; the interaction is Ca(2+)-dependent (By similarity). Interacts with VAMP8 (PubMed:10336434). Interacts with SNAP23 (PubMed:9507000). Interacts with VAPA and SYBU (By similarity). Interacts with PRRT2 (By similarity). Interacts with SEPT8 (PubMed:19196426). Interacts with STXBP5L (By similarity). Interacts with synaptotagmin-1/SYT1 (PubMed:26280336, PubMed:28813412). Interacts with SEPTIN5; in the cerebellar cortex (By similarity). Interacts with SEPTIN4; in the striatum (By similarity).</text>
</comment>
<comment type="interaction">
    <interactant intactId="EBI-539720">
        <id>P32851</id>
    </interactant>
    <interactant intactId="EBI-704760">
        <id>O35430</id>
        <label>Apba1</label>
    </interactant>
    <organismsDiffer>false</organismsDiffer>
    <experiments>3</experiments>
</comment>
<comment type="interaction">
    <interactant intactId="EBI-539720">
        <id>P32851</id>
    </interactant>
    <interactant intactId="EBI-15804323">
        <id>Q62717</id>
        <label>Cadps</label>
    </interactant>
    <organismsDiffer>false</organismsDiffer>
    <experiments>3</experiments>
</comment>
<comment type="interaction">
    <interactant intactId="EBI-539720">
        <id>P32851</id>
    </interactant>
    <interactant intactId="EBI-1027214">
        <id>P60881</id>
        <label>Snap25</label>
    </interactant>
    <organismsDiffer>false</organismsDiffer>
    <experiments>29</experiments>
</comment>
<comment type="interaction">
    <interactant intactId="EBI-539720">
        <id>P32851</id>
    </interactant>
    <interactant intactId="EBI-15685612">
        <id>P60881-2</id>
        <label>Snap25</label>
    </interactant>
    <organismsDiffer>false</organismsDiffer>
    <experiments>6</experiments>
</comment>
<comment type="interaction">
    <interactant intactId="EBI-539720">
        <id>P32851</id>
    </interactant>
    <interactant intactId="EBI-1029097">
        <id>P61765</id>
        <label>Stxbp1</label>
    </interactant>
    <organismsDiffer>false</organismsDiffer>
    <experiments>22</experiments>
</comment>
<comment type="interaction">
    <interactant intactId="EBI-539720">
        <id>P32851</id>
    </interactant>
    <interactant intactId="EBI-520880">
        <id>P63045</id>
        <label>Vamp2</label>
    </interactant>
    <organismsDiffer>false</organismsDiffer>
    <experiments>8</experiments>
</comment>
<comment type="interaction">
    <interactant intactId="EBI-539720">
        <id>P32851</id>
    </interactant>
    <interactant intactId="EBI-445270">
        <id>P60879</id>
        <label>Snap25</label>
    </interactant>
    <organismsDiffer>true</organismsDiffer>
    <experiments>7</experiments>
</comment>
<comment type="interaction">
    <interactant intactId="EBI-539720">
        <id>P32851</id>
    </interactant>
    <interactant intactId="EBI-12177361">
        <id>P60880-2</id>
        <label>SNAP25</label>
    </interactant>
    <organismsDiffer>true</organismsDiffer>
    <experiments>4</experiments>
</comment>
<comment type="interaction">
    <interactant intactId="EBI-539720">
        <id>P32851</id>
    </interactant>
    <interactant intactId="EBI-10244848">
        <id>Q5SQN1</id>
        <label>SNAP47</label>
    </interactant>
    <organismsDiffer>true</organismsDiffer>
    <experiments>3</experiments>
</comment>
<comment type="subcellular location">
    <subcellularLocation>
        <location evidence="2">Cytoplasmic vesicle</location>
        <location evidence="2">Secretory vesicle</location>
        <location evidence="2">Synaptic vesicle membrane</location>
        <topology evidence="2">Single-pass type IV membrane protein</topology>
    </subcellularLocation>
    <subcellularLocation>
        <location evidence="17 18 22 24 25">Cell membrane</location>
    </subcellularLocation>
    <subcellularLocation>
        <location evidence="2">Synapse</location>
        <location evidence="2">Synaptosome</location>
    </subcellularLocation>
    <text evidence="17">Colocalizes with KCNB1 at the cell membrane (PubMed:17301173). Colocalizes with PLCL1 at the cell membrane (PubMed:22673903).</text>
</comment>
<comment type="tissue specificity">
    <text>Expressed predominantly in cerebral cortex, hippocampus, cerebellum, adrenal medulla and retina with weak expression detected in non-neuronal tissues.</text>
</comment>
<comment type="PTM">
    <text evidence="14">Phosphorylated by CK2. Phosphorylation at Ser-188 by DAPK1 significantly decreases its interaction with STXBP1.</text>
</comment>
<comment type="PTM">
    <text evidence="28 29">(Microbial infection) Targeted and hydrolyzed by C.botulinum neurotoxin type C (BoNT/C), which hydrolyzes the 253-Lys-|-Ala-254 bond (PubMed:7737992). Cleavage inhibits neurotransmitter release (PubMed:7901002).</text>
</comment>
<comment type="PTM">
    <text evidence="1 3">Phosphorylated by CK2 (By similarity). Phosphorylation at Ser-188 by DAPK1 significantly decreases its interaction with STXBP1 (By similarity).</text>
</comment>
<comment type="PTM">
    <text evidence="3">Sumoylated, sumoylation is required for regulation of synaptic vesicle endocytosis.</text>
</comment>
<comment type="similarity">
    <text evidence="32">Belongs to the syntaxin family.</text>
</comment>
<comment type="sequence caution" evidence="32">
    <conflict type="erroneous initiation">
        <sequence resource="EMBL-CDS" id="BAA01231"/>
    </conflict>
    <text>Extended N-terminus.</text>
</comment>
<evidence type="ECO:0000250" key="1"/>
<evidence type="ECO:0000250" key="2">
    <source>
        <dbReference type="UniProtKB" id="O35526"/>
    </source>
</evidence>
<evidence type="ECO:0000250" key="3">
    <source>
        <dbReference type="UniProtKB" id="Q16623"/>
    </source>
</evidence>
<evidence type="ECO:0000255" key="4"/>
<evidence type="ECO:0000255" key="5">
    <source>
        <dbReference type="PROSITE-ProRule" id="PRU00202"/>
    </source>
</evidence>
<evidence type="ECO:0000256" key="6">
    <source>
        <dbReference type="SAM" id="MobiDB-lite"/>
    </source>
</evidence>
<evidence type="ECO:0000269" key="7">
    <source>
    </source>
</evidence>
<evidence type="ECO:0000269" key="8">
    <source>
    </source>
</evidence>
<evidence type="ECO:0000269" key="9">
    <source>
    </source>
</evidence>
<evidence type="ECO:0000269" key="10">
    <source>
    </source>
</evidence>
<evidence type="ECO:0000269" key="11">
    <source>
    </source>
</evidence>
<evidence type="ECO:0000269" key="12">
    <source>
    </source>
</evidence>
<evidence type="ECO:0000269" key="13">
    <source>
    </source>
</evidence>
<evidence type="ECO:0000269" key="14">
    <source>
    </source>
</evidence>
<evidence type="ECO:0000269" key="15">
    <source>
    </source>
</evidence>
<evidence type="ECO:0000269" key="16">
    <source>
    </source>
</evidence>
<evidence type="ECO:0000269" key="17">
    <source>
    </source>
</evidence>
<evidence type="ECO:0000269" key="18">
    <source>
    </source>
</evidence>
<evidence type="ECO:0000269" key="19">
    <source>
    </source>
</evidence>
<evidence type="ECO:0000269" key="20">
    <source>
    </source>
</evidence>
<evidence type="ECO:0000269" key="21">
    <source>
    </source>
</evidence>
<evidence type="ECO:0000269" key="22">
    <source>
    </source>
</evidence>
<evidence type="ECO:0000269" key="23">
    <source>
    </source>
</evidence>
<evidence type="ECO:0000269" key="24">
    <source>
    </source>
</evidence>
<evidence type="ECO:0000269" key="25">
    <source>
    </source>
</evidence>
<evidence type="ECO:0000269" key="26">
    <source>
    </source>
</evidence>
<evidence type="ECO:0000269" key="27">
    <source>
    </source>
</evidence>
<evidence type="ECO:0000269" key="28">
    <source>
    </source>
</evidence>
<evidence type="ECO:0000269" key="29">
    <source>
    </source>
</evidence>
<evidence type="ECO:0000269" key="30">
    <source>
    </source>
</evidence>
<evidence type="ECO:0000269" key="31">
    <source>
    </source>
</evidence>
<evidence type="ECO:0000305" key="32"/>
<evidence type="ECO:0007744" key="33">
    <source>
    </source>
</evidence>
<evidence type="ECO:0007829" key="34">
    <source>
        <dbReference type="PDB" id="1EZ3"/>
    </source>
</evidence>
<evidence type="ECO:0007829" key="35">
    <source>
        <dbReference type="PDB" id="1N7S"/>
    </source>
</evidence>
<evidence type="ECO:0007829" key="36">
    <source>
        <dbReference type="PDB" id="2M8R"/>
    </source>
</evidence>
<evidence type="ECO:0007829" key="37">
    <source>
        <dbReference type="PDB" id="3C98"/>
    </source>
</evidence>
<evidence type="ECO:0007829" key="38">
    <source>
        <dbReference type="PDB" id="4JEH"/>
    </source>
</evidence>
<evidence type="ECO:0007829" key="39">
    <source>
        <dbReference type="PDB" id="4JEU"/>
    </source>
</evidence>
<protein>
    <recommendedName>
        <fullName>Syntaxin-1A</fullName>
    </recommendedName>
    <alternativeName>
        <fullName>Neuron-specific antigen HPC-1</fullName>
    </alternativeName>
    <alternativeName>
        <fullName>Synaptotagmin-associated 35 kDa protein</fullName>
        <shortName>P35A</shortName>
    </alternativeName>
</protein>
<gene>
    <name type="primary">Stx1a</name>
    <name type="synonym">Sap</name>
</gene>
<feature type="chain" id="PRO_0000210189" description="Syntaxin-1A">
    <location>
        <begin position="1"/>
        <end position="288"/>
    </location>
</feature>
<feature type="topological domain" description="Cytoplasmic" evidence="4">
    <location>
        <begin position="1"/>
        <end position="265"/>
    </location>
</feature>
<feature type="transmembrane region" description="Helical; Anchor for type IV membrane protein" evidence="4">
    <location>
        <begin position="266"/>
        <end position="288"/>
    </location>
</feature>
<feature type="domain" description="t-SNARE coiled-coil homology" evidence="5">
    <location>
        <begin position="192"/>
        <end position="254"/>
    </location>
</feature>
<feature type="region of interest" description="Disordered" evidence="6">
    <location>
        <begin position="1"/>
        <end position="20"/>
    </location>
</feature>
<feature type="coiled-coil region" evidence="4">
    <location>
        <begin position="68"/>
        <end position="109"/>
    </location>
</feature>
<feature type="compositionally biased region" description="Basic and acidic residues" evidence="6">
    <location>
        <begin position="1"/>
        <end position="13"/>
    </location>
</feature>
<feature type="site" description="(Microbial infection) Cleavage; by C.botulinum neurotoxin type C (BoNT/C)" evidence="28">
    <location>
        <begin position="253"/>
        <end position="254"/>
    </location>
</feature>
<feature type="modified residue" description="Phosphoserine" evidence="33">
    <location>
        <position position="14"/>
    </location>
</feature>
<feature type="modified residue" description="Phosphoserine" evidence="33">
    <location>
        <position position="64"/>
    </location>
</feature>
<feature type="modified residue" description="Phosphoserine" evidence="33">
    <location>
        <position position="95"/>
    </location>
</feature>
<feature type="modified residue" description="Phosphoserine; by DAPK1" evidence="14">
    <location>
        <position position="188"/>
    </location>
</feature>
<feature type="cross-link" description="Glycyl lysine isopeptide (Lys-Gly) (interchain with G-Cter in SUMO)" evidence="3">
    <location>
        <position position="252"/>
    </location>
</feature>
<feature type="cross-link" description="Glycyl lysine isopeptide (Lys-Gly) (interchain with G-Cter in SUMO)" evidence="3">
    <location>
        <position position="253"/>
    </location>
</feature>
<feature type="cross-link" description="Glycyl lysine isopeptide (Lys-Gly) (interchain with G-Cter in SUMO)" evidence="3">
    <location>
        <position position="256"/>
    </location>
</feature>
<feature type="turn" evidence="37">
    <location>
        <begin position="6"/>
        <end position="8"/>
    </location>
</feature>
<feature type="helix" evidence="34">
    <location>
        <begin position="28"/>
        <end position="63"/>
    </location>
</feature>
<feature type="strand" evidence="39">
    <location>
        <begin position="64"/>
        <end position="66"/>
    </location>
</feature>
<feature type="helix" evidence="34">
    <location>
        <begin position="69"/>
        <end position="104"/>
    </location>
</feature>
<feature type="turn" evidence="37">
    <location>
        <begin position="105"/>
        <end position="107"/>
    </location>
</feature>
<feature type="helix" evidence="34">
    <location>
        <begin position="111"/>
        <end position="146"/>
    </location>
</feature>
<feature type="helix" evidence="38">
    <location>
        <begin position="162"/>
        <end position="170"/>
    </location>
</feature>
<feature type="helix" evidence="38">
    <location>
        <begin position="176"/>
        <end position="180"/>
    </location>
</feature>
<feature type="strand" evidence="38">
    <location>
        <begin position="183"/>
        <end position="185"/>
    </location>
</feature>
<feature type="helix" evidence="35">
    <location>
        <begin position="192"/>
        <end position="254"/>
    </location>
</feature>
<feature type="helix" evidence="36">
    <location>
        <begin position="261"/>
        <end position="284"/>
    </location>
</feature>
<organism>
    <name type="scientific">Rattus norvegicus</name>
    <name type="common">Rat</name>
    <dbReference type="NCBI Taxonomy" id="10116"/>
    <lineage>
        <taxon>Eukaryota</taxon>
        <taxon>Metazoa</taxon>
        <taxon>Chordata</taxon>
        <taxon>Craniata</taxon>
        <taxon>Vertebrata</taxon>
        <taxon>Euteleostomi</taxon>
        <taxon>Mammalia</taxon>
        <taxon>Eutheria</taxon>
        <taxon>Euarchontoglires</taxon>
        <taxon>Glires</taxon>
        <taxon>Rodentia</taxon>
        <taxon>Myomorpha</taxon>
        <taxon>Muroidea</taxon>
        <taxon>Muridae</taxon>
        <taxon>Murinae</taxon>
        <taxon>Rattus</taxon>
    </lineage>
</organism>
<keyword id="KW-0002">3D-structure</keyword>
<keyword id="KW-1003">Cell membrane</keyword>
<keyword id="KW-0175">Coiled coil</keyword>
<keyword id="KW-0968">Cytoplasmic vesicle</keyword>
<keyword id="KW-0903">Direct protein sequencing</keyword>
<keyword id="KW-0268">Exocytosis</keyword>
<keyword id="KW-1017">Isopeptide bond</keyword>
<keyword id="KW-0472">Membrane</keyword>
<keyword id="KW-0532">Neurotransmitter transport</keyword>
<keyword id="KW-0597">Phosphoprotein</keyword>
<keyword id="KW-1185">Reference proteome</keyword>
<keyword id="KW-0770">Synapse</keyword>
<keyword id="KW-0771">Synaptosome</keyword>
<keyword id="KW-0812">Transmembrane</keyword>
<keyword id="KW-1133">Transmembrane helix</keyword>
<keyword id="KW-0813">Transport</keyword>
<keyword id="KW-0832">Ubl conjugation</keyword>
<dbReference type="EMBL" id="D10392">
    <property type="protein sequence ID" value="BAA01231.1"/>
    <property type="status" value="ALT_INIT"/>
    <property type="molecule type" value="mRNA"/>
</dbReference>
<dbReference type="EMBL" id="D12519">
    <property type="protein sequence ID" value="BAA02089.1"/>
    <property type="molecule type" value="mRNA"/>
</dbReference>
<dbReference type="EMBL" id="M95734">
    <property type="protein sequence ID" value="AAA42195.1"/>
    <property type="molecule type" value="mRNA"/>
</dbReference>
<dbReference type="PIR" id="A38141">
    <property type="entry name" value="A38141"/>
</dbReference>
<dbReference type="RefSeq" id="NP_446240.2">
    <property type="nucleotide sequence ID" value="NM_053788.2"/>
</dbReference>
<dbReference type="PDB" id="1BR0">
    <property type="method" value="NMR"/>
    <property type="chains" value="A=27-144"/>
</dbReference>
<dbReference type="PDB" id="1EZ3">
    <property type="method" value="X-ray"/>
    <property type="resolution" value="1.90 A"/>
    <property type="chains" value="A/B/C=24-150"/>
</dbReference>
<dbReference type="PDB" id="1HVV">
    <property type="method" value="X-ray"/>
    <property type="resolution" value="2.40 A"/>
    <property type="chains" value="A/B/C/D=190-264"/>
</dbReference>
<dbReference type="PDB" id="1JTH">
    <property type="method" value="X-ray"/>
    <property type="resolution" value="2.00 A"/>
    <property type="chains" value="B/D=191-267"/>
</dbReference>
<dbReference type="PDB" id="1KIL">
    <property type="method" value="X-ray"/>
    <property type="resolution" value="2.30 A"/>
    <property type="chains" value="B=191-250"/>
</dbReference>
<dbReference type="PDB" id="1N7S">
    <property type="method" value="X-ray"/>
    <property type="resolution" value="1.45 A"/>
    <property type="chains" value="B=191-256"/>
</dbReference>
<dbReference type="PDB" id="1SFC">
    <property type="method" value="X-ray"/>
    <property type="resolution" value="2.40 A"/>
    <property type="chains" value="B/F/J=180-262"/>
</dbReference>
<dbReference type="PDB" id="1URQ">
    <property type="method" value="X-ray"/>
    <property type="resolution" value="2.00 A"/>
    <property type="chains" value="B=188-259"/>
</dbReference>
<dbReference type="PDB" id="2M8R">
    <property type="method" value="NMR"/>
    <property type="chains" value="A=183-288"/>
</dbReference>
<dbReference type="PDB" id="2N1T">
    <property type="method" value="NMR"/>
    <property type="chains" value="B=188-259"/>
</dbReference>
<dbReference type="PDB" id="3C98">
    <property type="method" value="X-ray"/>
    <property type="resolution" value="2.60 A"/>
    <property type="chains" value="B=1-267"/>
</dbReference>
<dbReference type="PDB" id="3HD7">
    <property type="method" value="X-ray"/>
    <property type="resolution" value="3.40 A"/>
    <property type="chains" value="B/F=183-288"/>
</dbReference>
<dbReference type="PDB" id="3IPD">
    <property type="method" value="X-ray"/>
    <property type="resolution" value="4.80 A"/>
    <property type="chains" value="B/F=183-288"/>
</dbReference>
<dbReference type="PDB" id="3J96">
    <property type="method" value="EM"/>
    <property type="resolution" value="7.60 A"/>
    <property type="chains" value="L=191-256"/>
</dbReference>
<dbReference type="PDB" id="3J97">
    <property type="method" value="EM"/>
    <property type="resolution" value="7.80 A"/>
    <property type="chains" value="L=191-256"/>
</dbReference>
<dbReference type="PDB" id="3J98">
    <property type="method" value="EM"/>
    <property type="resolution" value="8.40 A"/>
    <property type="chains" value="L=191-256"/>
</dbReference>
<dbReference type="PDB" id="3J99">
    <property type="method" value="EM"/>
    <property type="resolution" value="8.20 A"/>
    <property type="chains" value="L=191-256"/>
</dbReference>
<dbReference type="PDB" id="3RK2">
    <property type="method" value="X-ray"/>
    <property type="resolution" value="2.20 A"/>
    <property type="chains" value="B/F=191-253"/>
</dbReference>
<dbReference type="PDB" id="3RK3">
    <property type="method" value="X-ray"/>
    <property type="resolution" value="3.50 A"/>
    <property type="chains" value="B=191-253"/>
</dbReference>
<dbReference type="PDB" id="3RL0">
    <property type="method" value="X-ray"/>
    <property type="resolution" value="3.80 A"/>
    <property type="chains" value="B/F/J/N/R/V/Z/d=191-253"/>
</dbReference>
<dbReference type="PDB" id="4JEH">
    <property type="method" value="X-ray"/>
    <property type="resolution" value="2.50 A"/>
    <property type="chains" value="B=25-266"/>
</dbReference>
<dbReference type="PDB" id="4JEU">
    <property type="method" value="X-ray"/>
    <property type="resolution" value="3.20 A"/>
    <property type="chains" value="B=2-243"/>
</dbReference>
<dbReference type="PDB" id="5CCG">
    <property type="method" value="X-ray"/>
    <property type="resolution" value="3.50 A"/>
    <property type="chains" value="B/H=191-256"/>
</dbReference>
<dbReference type="PDB" id="5CCH">
    <property type="method" value="X-ray"/>
    <property type="resolution" value="3.60 A"/>
    <property type="chains" value="B=191-256"/>
</dbReference>
<dbReference type="PDB" id="5CCI">
    <property type="method" value="X-ray"/>
    <property type="resolution" value="4.10 A"/>
    <property type="chains" value="B=191-256"/>
</dbReference>
<dbReference type="PDB" id="5KJ7">
    <property type="method" value="X-ray"/>
    <property type="resolution" value="3.50 A"/>
    <property type="chains" value="B/H=191-256"/>
</dbReference>
<dbReference type="PDB" id="5KJ8">
    <property type="method" value="X-ray"/>
    <property type="resolution" value="4.10 A"/>
    <property type="chains" value="B/H=191-256"/>
</dbReference>
<dbReference type="PDB" id="5W5C">
    <property type="method" value="X-ray"/>
    <property type="resolution" value="1.85 A"/>
    <property type="chains" value="B=190-256"/>
</dbReference>
<dbReference type="PDB" id="5W5D">
    <property type="method" value="X-ray"/>
    <property type="resolution" value="2.50 A"/>
    <property type="chains" value="B=190-256"/>
</dbReference>
<dbReference type="PDB" id="6IP1">
    <property type="method" value="EM"/>
    <property type="resolution" value="3.90 A"/>
    <property type="chains" value="B=2-253"/>
</dbReference>
<dbReference type="PDB" id="6MDM">
    <property type="method" value="EM"/>
    <property type="resolution" value="4.40 A"/>
    <property type="chains" value="I=1-256"/>
</dbReference>
<dbReference type="PDB" id="6MDN">
    <property type="method" value="EM"/>
    <property type="resolution" value="4.40 A"/>
    <property type="chains" value="I=1-256"/>
</dbReference>
<dbReference type="PDB" id="6MTI">
    <property type="method" value="EM"/>
    <property type="resolution" value="10.40 A"/>
    <property type="chains" value="B/F/J/N/R/V=190-256"/>
</dbReference>
<dbReference type="PDB" id="6WVW">
    <property type="method" value="X-ray"/>
    <property type="resolution" value="2.11 A"/>
    <property type="chains" value="B/F=191-256"/>
</dbReference>
<dbReference type="PDB" id="7UDB">
    <property type="method" value="EM"/>
    <property type="resolution" value="3.50 A"/>
    <property type="chains" value="B=2-253"/>
</dbReference>
<dbReference type="PDB" id="7UDC">
    <property type="method" value="EM"/>
    <property type="resolution" value="3.70 A"/>
    <property type="chains" value="B=2-253"/>
</dbReference>
<dbReference type="PDB" id="7XSJ">
    <property type="method" value="X-ray"/>
    <property type="resolution" value="3.20 A"/>
    <property type="chains" value="B=25-267"/>
</dbReference>
<dbReference type="PDBsum" id="1BR0"/>
<dbReference type="PDBsum" id="1EZ3"/>
<dbReference type="PDBsum" id="1HVV"/>
<dbReference type="PDBsum" id="1JTH"/>
<dbReference type="PDBsum" id="1KIL"/>
<dbReference type="PDBsum" id="1N7S"/>
<dbReference type="PDBsum" id="1SFC"/>
<dbReference type="PDBsum" id="1URQ"/>
<dbReference type="PDBsum" id="2M8R"/>
<dbReference type="PDBsum" id="2N1T"/>
<dbReference type="PDBsum" id="3C98"/>
<dbReference type="PDBsum" id="3HD7"/>
<dbReference type="PDBsum" id="3IPD"/>
<dbReference type="PDBsum" id="3J96"/>
<dbReference type="PDBsum" id="3J97"/>
<dbReference type="PDBsum" id="3J98"/>
<dbReference type="PDBsum" id="3J99"/>
<dbReference type="PDBsum" id="3RK2"/>
<dbReference type="PDBsum" id="3RK3"/>
<dbReference type="PDBsum" id="3RL0"/>
<dbReference type="PDBsum" id="4JEH"/>
<dbReference type="PDBsum" id="4JEU"/>
<dbReference type="PDBsum" id="5CCG"/>
<dbReference type="PDBsum" id="5CCH"/>
<dbReference type="PDBsum" id="5CCI"/>
<dbReference type="PDBsum" id="5KJ7"/>
<dbReference type="PDBsum" id="5KJ8"/>
<dbReference type="PDBsum" id="5W5C"/>
<dbReference type="PDBsum" id="5W5D"/>
<dbReference type="PDBsum" id="6IP1"/>
<dbReference type="PDBsum" id="6MDM"/>
<dbReference type="PDBsum" id="6MDN"/>
<dbReference type="PDBsum" id="6MTI"/>
<dbReference type="PDBsum" id="6WVW"/>
<dbReference type="PDBsum" id="7UDB"/>
<dbReference type="PDBsum" id="7UDC"/>
<dbReference type="PDBsum" id="7XSJ"/>
<dbReference type="BMRB" id="P32851"/>
<dbReference type="EMDB" id="EMD-26455"/>
<dbReference type="EMDB" id="EMD-26456"/>
<dbReference type="EMDB" id="EMD-6206"/>
<dbReference type="EMDB" id="EMD-6207"/>
<dbReference type="EMDB" id="EMD-6208"/>
<dbReference type="EMDB" id="EMD-6209"/>
<dbReference type="EMDB" id="EMD-6210"/>
<dbReference type="EMDB" id="EMD-9100"/>
<dbReference type="EMDB" id="EMD-9101"/>
<dbReference type="EMDB" id="EMD-9697"/>
<dbReference type="SMR" id="P32851"/>
<dbReference type="BioGRID" id="250448">
    <property type="interactions" value="18"/>
</dbReference>
<dbReference type="CORUM" id="P32851"/>
<dbReference type="DIP" id="DIP-108N"/>
<dbReference type="FunCoup" id="P32851">
    <property type="interactions" value="1152"/>
</dbReference>
<dbReference type="IntAct" id="P32851">
    <property type="interactions" value="26"/>
</dbReference>
<dbReference type="MINT" id="P32851"/>
<dbReference type="STRING" id="10116.ENSRNOP00000040699"/>
<dbReference type="iPTMnet" id="P32851"/>
<dbReference type="PhosphoSitePlus" id="P32851"/>
<dbReference type="SwissPalm" id="P32851"/>
<dbReference type="jPOST" id="P32851"/>
<dbReference type="PaxDb" id="10116-ENSRNOP00000040699"/>
<dbReference type="GeneID" id="116470"/>
<dbReference type="KEGG" id="rno:116470"/>
<dbReference type="UCSC" id="RGD:69430">
    <property type="organism name" value="rat"/>
</dbReference>
<dbReference type="AGR" id="RGD:69430"/>
<dbReference type="CTD" id="6804"/>
<dbReference type="RGD" id="69430">
    <property type="gene designation" value="Stx1a"/>
</dbReference>
<dbReference type="VEuPathDB" id="HostDB:ENSRNOG00000029165"/>
<dbReference type="eggNOG" id="KOG0810">
    <property type="taxonomic scope" value="Eukaryota"/>
</dbReference>
<dbReference type="HOGENOM" id="CLU_042423_2_2_1"/>
<dbReference type="InParanoid" id="P32851"/>
<dbReference type="OrthoDB" id="10255013at2759"/>
<dbReference type="PhylomeDB" id="P32851"/>
<dbReference type="TreeFam" id="TF313763"/>
<dbReference type="Reactome" id="R-RNO-181429">
    <property type="pathway name" value="Serotonin Neurotransmitter Release Cycle"/>
</dbReference>
<dbReference type="Reactome" id="R-RNO-181430">
    <property type="pathway name" value="Norepinephrine Neurotransmitter Release Cycle"/>
</dbReference>
<dbReference type="Reactome" id="R-RNO-210500">
    <property type="pathway name" value="Glutamate Neurotransmitter Release Cycle"/>
</dbReference>
<dbReference type="Reactome" id="R-RNO-212676">
    <property type="pathway name" value="Dopamine Neurotransmitter Release Cycle"/>
</dbReference>
<dbReference type="Reactome" id="R-RNO-264642">
    <property type="pathway name" value="Acetylcholine Neurotransmitter Release Cycle"/>
</dbReference>
<dbReference type="Reactome" id="R-RNO-449836">
    <property type="pathway name" value="Other interleukin signaling"/>
</dbReference>
<dbReference type="Reactome" id="R-RNO-5682910">
    <property type="pathway name" value="LGI-ADAM interactions"/>
</dbReference>
<dbReference type="Reactome" id="R-RNO-888590">
    <property type="pathway name" value="GABA synthesis, release, reuptake and degradation"/>
</dbReference>
<dbReference type="Reactome" id="R-RNO-9609523">
    <property type="pathway name" value="Insertion of tail-anchored proteins into the endoplasmic reticulum membrane"/>
</dbReference>
<dbReference type="EvolutionaryTrace" id="P32851"/>
<dbReference type="PRO" id="PR:P32851"/>
<dbReference type="Proteomes" id="UP000002494">
    <property type="component" value="Chromosome 12"/>
</dbReference>
<dbReference type="Bgee" id="ENSRNOG00000029165">
    <property type="expression patterns" value="Expressed in frontal cortex and 19 other cell types or tissues"/>
</dbReference>
<dbReference type="ExpressionAtlas" id="P32851">
    <property type="expression patterns" value="baseline and differential"/>
</dbReference>
<dbReference type="GO" id="GO:0001669">
    <property type="term" value="C:acrosomal vesicle"/>
    <property type="evidence" value="ECO:0000266"/>
    <property type="project" value="RGD"/>
</dbReference>
<dbReference type="GO" id="GO:0042641">
    <property type="term" value="C:actomyosin"/>
    <property type="evidence" value="ECO:0000314"/>
    <property type="project" value="RGD"/>
</dbReference>
<dbReference type="GO" id="GO:0030424">
    <property type="term" value="C:axon"/>
    <property type="evidence" value="ECO:0000266"/>
    <property type="project" value="RGD"/>
</dbReference>
<dbReference type="GO" id="GO:0012505">
    <property type="term" value="C:endomembrane system"/>
    <property type="evidence" value="ECO:0000318"/>
    <property type="project" value="GO_Central"/>
</dbReference>
<dbReference type="GO" id="GO:0098978">
    <property type="term" value="C:glutamatergic synapse"/>
    <property type="evidence" value="ECO:0000314"/>
    <property type="project" value="SynGO"/>
</dbReference>
<dbReference type="GO" id="GO:0016020">
    <property type="term" value="C:membrane"/>
    <property type="evidence" value="ECO:0000266"/>
    <property type="project" value="RGD"/>
</dbReference>
<dbReference type="GO" id="GO:0043005">
    <property type="term" value="C:neuron projection"/>
    <property type="evidence" value="ECO:0000266"/>
    <property type="project" value="RGD"/>
</dbReference>
<dbReference type="GO" id="GO:0031965">
    <property type="term" value="C:nuclear membrane"/>
    <property type="evidence" value="ECO:0000266"/>
    <property type="project" value="RGD"/>
</dbReference>
<dbReference type="GO" id="GO:0005886">
    <property type="term" value="C:plasma membrane"/>
    <property type="evidence" value="ECO:0000314"/>
    <property type="project" value="UniProtKB"/>
</dbReference>
<dbReference type="GO" id="GO:0098839">
    <property type="term" value="C:postsynaptic density membrane"/>
    <property type="evidence" value="ECO:0000314"/>
    <property type="project" value="SynGO"/>
</dbReference>
<dbReference type="GO" id="GO:0048787">
    <property type="term" value="C:presynaptic active zone membrane"/>
    <property type="evidence" value="ECO:0000314"/>
    <property type="project" value="SynGO"/>
</dbReference>
<dbReference type="GO" id="GO:0042734">
    <property type="term" value="C:presynaptic membrane"/>
    <property type="evidence" value="ECO:0000314"/>
    <property type="project" value="ParkinsonsUK-UCL"/>
</dbReference>
<dbReference type="GO" id="GO:0032991">
    <property type="term" value="C:protein-containing complex"/>
    <property type="evidence" value="ECO:0000314"/>
    <property type="project" value="RGD"/>
</dbReference>
<dbReference type="GO" id="GO:0098685">
    <property type="term" value="C:Schaffer collateral - CA1 synapse"/>
    <property type="evidence" value="ECO:0000314"/>
    <property type="project" value="SynGO"/>
</dbReference>
<dbReference type="GO" id="GO:0030141">
    <property type="term" value="C:secretory granule"/>
    <property type="evidence" value="ECO:0000314"/>
    <property type="project" value="UniProtKB"/>
</dbReference>
<dbReference type="GO" id="GO:0031201">
    <property type="term" value="C:SNARE complex"/>
    <property type="evidence" value="ECO:0000250"/>
    <property type="project" value="UniProtKB"/>
</dbReference>
<dbReference type="GO" id="GO:0008021">
    <property type="term" value="C:synaptic vesicle"/>
    <property type="evidence" value="ECO:0000266"/>
    <property type="project" value="RGD"/>
</dbReference>
<dbReference type="GO" id="GO:0030672">
    <property type="term" value="C:synaptic vesicle membrane"/>
    <property type="evidence" value="ECO:0000314"/>
    <property type="project" value="RGD"/>
</dbReference>
<dbReference type="GO" id="GO:0070044">
    <property type="term" value="C:synaptobrevin 2-SNAP-25-syntaxin-1a complex"/>
    <property type="evidence" value="ECO:0000314"/>
    <property type="project" value="MGI"/>
</dbReference>
<dbReference type="GO" id="GO:0070032">
    <property type="term" value="C:synaptobrevin 2-SNAP-25-syntaxin-1a-complexin I complex"/>
    <property type="evidence" value="ECO:0000314"/>
    <property type="project" value="MGI"/>
</dbReference>
<dbReference type="GO" id="GO:0070033">
    <property type="term" value="C:synaptobrevin 2-SNAP-25-syntaxin-1a-complexin II complex"/>
    <property type="evidence" value="ECO:0000314"/>
    <property type="project" value="RGD"/>
</dbReference>
<dbReference type="GO" id="GO:0043008">
    <property type="term" value="F:ATP-dependent protein binding"/>
    <property type="evidence" value="ECO:0000353"/>
    <property type="project" value="RGD"/>
</dbReference>
<dbReference type="GO" id="GO:0019855">
    <property type="term" value="F:calcium channel inhibitor activity"/>
    <property type="evidence" value="ECO:0000266"/>
    <property type="project" value="RGD"/>
</dbReference>
<dbReference type="GO" id="GO:0048306">
    <property type="term" value="F:calcium-dependent protein binding"/>
    <property type="evidence" value="ECO:0000353"/>
    <property type="project" value="RGD"/>
</dbReference>
<dbReference type="GO" id="GO:0019869">
    <property type="term" value="F:chloride channel inhibitor activity"/>
    <property type="evidence" value="ECO:0000266"/>
    <property type="project" value="RGD"/>
</dbReference>
<dbReference type="GO" id="GO:0042802">
    <property type="term" value="F:identical protein binding"/>
    <property type="evidence" value="ECO:0000266"/>
    <property type="project" value="RGD"/>
</dbReference>
<dbReference type="GO" id="GO:0019900">
    <property type="term" value="F:kinase binding"/>
    <property type="evidence" value="ECO:0000266"/>
    <property type="project" value="RGD"/>
</dbReference>
<dbReference type="GO" id="GO:0017022">
    <property type="term" value="F:myosin binding"/>
    <property type="evidence" value="ECO:0000353"/>
    <property type="project" value="RGD"/>
</dbReference>
<dbReference type="GO" id="GO:0032028">
    <property type="term" value="F:myosin head/neck binding"/>
    <property type="evidence" value="ECO:0000353"/>
    <property type="project" value="RGD"/>
</dbReference>
<dbReference type="GO" id="GO:0044877">
    <property type="term" value="F:protein-containing complex binding"/>
    <property type="evidence" value="ECO:0000314"/>
    <property type="project" value="RGD"/>
</dbReference>
<dbReference type="GO" id="GO:0030674">
    <property type="term" value="F:protein-macromolecule adaptor activity"/>
    <property type="evidence" value="ECO:0000353"/>
    <property type="project" value="RGD"/>
</dbReference>
<dbReference type="GO" id="GO:0005484">
    <property type="term" value="F:SNAP receptor activity"/>
    <property type="evidence" value="ECO:0000318"/>
    <property type="project" value="GO_Central"/>
</dbReference>
<dbReference type="GO" id="GO:0000149">
    <property type="term" value="F:SNARE binding"/>
    <property type="evidence" value="ECO:0000314"/>
    <property type="project" value="MGI"/>
</dbReference>
<dbReference type="GO" id="GO:0044325">
    <property type="term" value="F:transmembrane transporter binding"/>
    <property type="evidence" value="ECO:0000353"/>
    <property type="project" value="UniProtKB"/>
</dbReference>
<dbReference type="GO" id="GO:0017156">
    <property type="term" value="P:calcium-ion regulated exocytosis"/>
    <property type="evidence" value="ECO:0000266"/>
    <property type="project" value="RGD"/>
</dbReference>
<dbReference type="GO" id="GO:0006887">
    <property type="term" value="P:exocytosis"/>
    <property type="evidence" value="ECO:0000318"/>
    <property type="project" value="GO_Central"/>
</dbReference>
<dbReference type="GO" id="GO:0046879">
    <property type="term" value="P:hormone secretion"/>
    <property type="evidence" value="ECO:0000266"/>
    <property type="project" value="RGD"/>
</dbReference>
<dbReference type="GO" id="GO:0030073">
    <property type="term" value="P:insulin secretion"/>
    <property type="evidence" value="ECO:0000266"/>
    <property type="project" value="RGD"/>
</dbReference>
<dbReference type="GO" id="GO:0006886">
    <property type="term" value="P:intracellular protein transport"/>
    <property type="evidence" value="ECO:0000318"/>
    <property type="project" value="GO_Central"/>
</dbReference>
<dbReference type="GO" id="GO:0098815">
    <property type="term" value="P:modulation of excitatory postsynaptic potential"/>
    <property type="evidence" value="ECO:0000315"/>
    <property type="project" value="ParkinsonsUK-UCL"/>
</dbReference>
<dbReference type="GO" id="GO:0006836">
    <property type="term" value="P:neurotransmitter transport"/>
    <property type="evidence" value="ECO:0000304"/>
    <property type="project" value="RGD"/>
</dbReference>
<dbReference type="GO" id="GO:0045956">
    <property type="term" value="P:positive regulation of calcium ion-dependent exocytosis"/>
    <property type="evidence" value="ECO:0000314"/>
    <property type="project" value="UniProtKB"/>
</dbReference>
<dbReference type="GO" id="GO:0033605">
    <property type="term" value="P:positive regulation of catecholamine secretion"/>
    <property type="evidence" value="ECO:0000314"/>
    <property type="project" value="UniProtKB"/>
</dbReference>
<dbReference type="GO" id="GO:2000463">
    <property type="term" value="P:positive regulation of excitatory postsynaptic potential"/>
    <property type="evidence" value="ECO:0000266"/>
    <property type="project" value="RGD"/>
</dbReference>
<dbReference type="GO" id="GO:0045921">
    <property type="term" value="P:positive regulation of exocytosis"/>
    <property type="evidence" value="ECO:0000314"/>
    <property type="project" value="RGD"/>
</dbReference>
<dbReference type="GO" id="GO:0001956">
    <property type="term" value="P:positive regulation of neurotransmitter secretion"/>
    <property type="evidence" value="ECO:0000315"/>
    <property type="project" value="RGD"/>
</dbReference>
<dbReference type="GO" id="GO:0010701">
    <property type="term" value="P:positive regulation of norepinephrine secretion"/>
    <property type="evidence" value="ECO:0000314"/>
    <property type="project" value="UniProtKB"/>
</dbReference>
<dbReference type="GO" id="GO:0072657">
    <property type="term" value="P:protein localization to membrane"/>
    <property type="evidence" value="ECO:0000314"/>
    <property type="project" value="ParkinsonsUK-UCL"/>
</dbReference>
<dbReference type="GO" id="GO:0016925">
    <property type="term" value="P:protein sumoylation"/>
    <property type="evidence" value="ECO:0000266"/>
    <property type="project" value="RGD"/>
</dbReference>
<dbReference type="GO" id="GO:0045055">
    <property type="term" value="P:regulated exocytosis"/>
    <property type="evidence" value="ECO:0000266"/>
    <property type="project" value="RGD"/>
</dbReference>
<dbReference type="GO" id="GO:0017157">
    <property type="term" value="P:regulation of exocytosis"/>
    <property type="evidence" value="ECO:0000315"/>
    <property type="project" value="RGD"/>
</dbReference>
<dbReference type="GO" id="GO:0010807">
    <property type="term" value="P:regulation of synaptic vesicle priming"/>
    <property type="evidence" value="ECO:0000266"/>
    <property type="project" value="RGD"/>
</dbReference>
<dbReference type="GO" id="GO:0009629">
    <property type="term" value="P:response to gravity"/>
    <property type="evidence" value="ECO:0000314"/>
    <property type="project" value="RGD"/>
</dbReference>
<dbReference type="GO" id="GO:0032940">
    <property type="term" value="P:secretion by cell"/>
    <property type="evidence" value="ECO:0000266"/>
    <property type="project" value="RGD"/>
</dbReference>
<dbReference type="GO" id="GO:0035493">
    <property type="term" value="P:SNARE complex assembly"/>
    <property type="evidence" value="ECO:0000315"/>
    <property type="project" value="CAFA"/>
</dbReference>
<dbReference type="GO" id="GO:0016081">
    <property type="term" value="P:synaptic vesicle docking"/>
    <property type="evidence" value="ECO:0000270"/>
    <property type="project" value="UniProtKB"/>
</dbReference>
<dbReference type="GO" id="GO:0048488">
    <property type="term" value="P:synaptic vesicle endocytosis"/>
    <property type="evidence" value="ECO:0000266"/>
    <property type="project" value="RGD"/>
</dbReference>
<dbReference type="GO" id="GO:0016079">
    <property type="term" value="P:synaptic vesicle exocytosis"/>
    <property type="evidence" value="ECO:0000314"/>
    <property type="project" value="SynGO"/>
</dbReference>
<dbReference type="GO" id="GO:0048278">
    <property type="term" value="P:vesicle docking"/>
    <property type="evidence" value="ECO:0000266"/>
    <property type="project" value="RGD"/>
</dbReference>
<dbReference type="GO" id="GO:0006906">
    <property type="term" value="P:vesicle fusion"/>
    <property type="evidence" value="ECO:0000318"/>
    <property type="project" value="GO_Central"/>
</dbReference>
<dbReference type="CDD" id="cd15880">
    <property type="entry name" value="SNARE_syntaxin1"/>
    <property type="match status" value="1"/>
</dbReference>
<dbReference type="CDD" id="cd00179">
    <property type="entry name" value="SynN"/>
    <property type="match status" value="1"/>
</dbReference>
<dbReference type="DisProt" id="DP00155"/>
<dbReference type="FunFam" id="1.20.58.70:FF:000042">
    <property type="entry name" value="Syntaxin 11b, tandem duplicate 2"/>
    <property type="match status" value="1"/>
</dbReference>
<dbReference type="FunFam" id="1.20.5.110:FF:000005">
    <property type="entry name" value="Syntaxin 1B"/>
    <property type="match status" value="1"/>
</dbReference>
<dbReference type="Gene3D" id="1.20.5.110">
    <property type="match status" value="1"/>
</dbReference>
<dbReference type="Gene3D" id="1.20.58.70">
    <property type="match status" value="1"/>
</dbReference>
<dbReference type="InterPro" id="IPR010989">
    <property type="entry name" value="SNARE"/>
</dbReference>
<dbReference type="InterPro" id="IPR045242">
    <property type="entry name" value="Syntaxin"/>
</dbReference>
<dbReference type="InterPro" id="IPR006012">
    <property type="entry name" value="Syntaxin/epimorphin_CS"/>
</dbReference>
<dbReference type="InterPro" id="IPR006011">
    <property type="entry name" value="Syntaxin_N"/>
</dbReference>
<dbReference type="InterPro" id="IPR000727">
    <property type="entry name" value="T_SNARE_dom"/>
</dbReference>
<dbReference type="PANTHER" id="PTHR19957">
    <property type="entry name" value="SYNTAXIN"/>
    <property type="match status" value="1"/>
</dbReference>
<dbReference type="PANTHER" id="PTHR19957:SF84">
    <property type="entry name" value="SYNTAXIN-1A"/>
    <property type="match status" value="1"/>
</dbReference>
<dbReference type="Pfam" id="PF05739">
    <property type="entry name" value="SNARE"/>
    <property type="match status" value="1"/>
</dbReference>
<dbReference type="Pfam" id="PF00804">
    <property type="entry name" value="Syntaxin"/>
    <property type="match status" value="1"/>
</dbReference>
<dbReference type="SMART" id="SM00503">
    <property type="entry name" value="SynN"/>
    <property type="match status" value="1"/>
</dbReference>
<dbReference type="SMART" id="SM00397">
    <property type="entry name" value="t_SNARE"/>
    <property type="match status" value="1"/>
</dbReference>
<dbReference type="SUPFAM" id="SSF47661">
    <property type="entry name" value="t-snare proteins"/>
    <property type="match status" value="1"/>
</dbReference>
<dbReference type="PROSITE" id="PS00914">
    <property type="entry name" value="SYNTAXIN"/>
    <property type="match status" value="1"/>
</dbReference>
<dbReference type="PROSITE" id="PS50192">
    <property type="entry name" value="T_SNARE"/>
    <property type="match status" value="1"/>
</dbReference>
<accession>P32851</accession>
<sequence>MKDRTQELRTAKDSDDDDDVTVTVDRDRFMDEFFEQVEEIRGFIDKIAENVEEVKRKHSAILASPNPDEKTKEELEELMSDIKKTANKVRSKLKSIEQSIEQEEGLNRSSADLRIRKTQHSTLSRKFVEVMSEYNATQSDYRERCKGRIQRQLEITGRTTTSEELEDMLESGNPAIFASGIIMDSSISKQALSEIETRHSEIIKLENSIRELHDMFMDMAMLVESQGEMIDRIEYNVEHAVDYVERAVSDTKKAVKYQSKARRKKIMIIICCVILGIIIASTIGGIFG</sequence>
<reference key="1">
    <citation type="journal article" date="1992" name="J. Biol. Chem.">
        <title>Cloning and sequence analysis of cDNA for a neuronal cell membrane antigen, HPC-1.</title>
        <authorList>
            <person name="Inoue A."/>
            <person name="Obata K."/>
            <person name="Akagawa K."/>
        </authorList>
    </citation>
    <scope>NUCLEOTIDE SEQUENCE [MRNA]</scope>
    <scope>PROTEIN SEQUENCE OF 8-37 AND 44-102</scope>
    <source>
        <tissue>Brain</tissue>
    </source>
</reference>
<reference key="2">
    <citation type="journal article" date="1992" name="J. Biol. Chem.">
        <title>HPC-1 is associated with synaptotagmin and omega-conotoxin receptor.</title>
        <authorList>
            <person name="Yoshida A."/>
            <person name="Oho C."/>
            <person name="Omori A."/>
            <person name="Kuwahara R."/>
            <person name="Ito T."/>
            <person name="Takahashi M."/>
        </authorList>
    </citation>
    <scope>NUCLEOTIDE SEQUENCE [MRNA] OF 4-288</scope>
    <scope>PROTEIN SEQUENCE OF 1-15 AND 95-113</scope>
    <source>
        <tissue>Brain</tissue>
    </source>
</reference>
<reference key="3">
    <citation type="journal article" date="1992" name="Science">
        <title>Syntaxin: a synaptic protein implicated in docking of synaptic vesicles at presynaptic active zones.</title>
        <authorList>
            <person name="Bennett M.K."/>
            <person name="Calakos N."/>
            <person name="Scheller R.H."/>
        </authorList>
    </citation>
    <scope>NUCLEOTIDE SEQUENCE [MRNA] OF 4-288</scope>
    <scope>PROTEIN SEQUENCE OF 4-16 AND 31-56</scope>
    <source>
        <tissue>Brain</tissue>
    </source>
</reference>
<reference key="4">
    <citation type="journal article" date="1993" name="Cell">
        <title>The syntaxin family of vesicular transport receptors.</title>
        <authorList>
            <person name="Bennett M.K."/>
            <person name="Garcia-Arraras J.E."/>
            <person name="Elferink L.A."/>
            <person name="Peterson K.E."/>
            <person name="Fleming A.M."/>
            <person name="Hazuka C.D."/>
            <person name="Scheller R.H."/>
        </authorList>
    </citation>
    <scope>NUCLEOTIDE SEQUENCE [MRNA]</scope>
</reference>
<reference key="5">
    <citation type="journal article" date="1993" name="EMBO J.">
        <title>Botulinum neurotoxin C1 blocks neurotransmitter release by means of cleaving HPC-1/syntaxin.</title>
        <authorList>
            <person name="Blasi J."/>
            <person name="Chapman E.R."/>
            <person name="Yamasaki S."/>
            <person name="Binz T."/>
            <person name="Niemann H."/>
            <person name="Jahn R."/>
        </authorList>
    </citation>
    <scope>FUNCTION</scope>
    <scope>PROTEOLYTIC CLEAVAGE (MICROBIAL INFECTION) BY C.BOTULINUM NEUROTOXIN TYPE C</scope>
</reference>
<reference key="6">
    <citation type="journal article" date="1995" name="J. Biol. Chem.">
        <title>Botulinum neurotoxin type C cleaves a single Lys-Ala bond within the carboxyl-terminal region of syntaxins.</title>
        <authorList>
            <person name="Schiavo G."/>
            <person name="Shone C.C."/>
            <person name="Bennett M.K."/>
            <person name="Scheller R.H."/>
            <person name="Montecucco C."/>
        </authorList>
    </citation>
    <scope>FUNCTION</scope>
    <scope>PROTEOLYTIC CLEAVAGE (MICROBIAL INFECTION) BY C.BOTULINUM NEUROTOXIN TYPE C</scope>
</reference>
<reference key="7">
    <citation type="journal article" date="1998" name="J. Biol. Chem.">
        <title>Syntaxin 12, a member of the syntaxin family localized to the endosome.</title>
        <authorList>
            <person name="Tang B.L."/>
            <person name="Tan A.E."/>
            <person name="Lim L.K."/>
            <person name="Lee S.S."/>
            <person name="Low D.Y."/>
            <person name="Hong W."/>
        </authorList>
    </citation>
    <scope>INTERACTION WITH SNAP23</scope>
</reference>
<reference key="8">
    <citation type="journal article" date="1999" name="J. Biol. Chem.">
        <title>Mixed and non-cognate SNARE complexes. Characterization of assembly and biophysical properties.</title>
        <authorList>
            <person name="Fasshauer D."/>
            <person name="Antonin W."/>
            <person name="Margittai M."/>
            <person name="Pabst S."/>
            <person name="Jahn R."/>
        </authorList>
    </citation>
    <scope>IDENTIFICATION IN A TERNARY COMPLEX WITH VAMP8 AND SNAP25</scope>
</reference>
<reference key="9">
    <citation type="journal article" date="2001" name="Biochem. Soc. Trans.">
        <title>Regulation of the serotonin transporter by interacting proteins.</title>
        <authorList>
            <person name="Haase J."/>
            <person name="Killian A.M."/>
            <person name="Magnani F."/>
            <person name="Williams C."/>
        </authorList>
    </citation>
    <scope>INTERACTION WITH SLC6A4</scope>
</reference>
<reference key="10">
    <citation type="journal article" date="2002" name="J. Biol. Chem.">
        <title>Amisyn, a novel syntaxin-binding protein that may regulate SNARE complex assembly.</title>
        <authorList>
            <person name="Scales S.J."/>
            <person name="Hesser B.A."/>
            <person name="Masuda E.S."/>
            <person name="Scheller R.H."/>
        </authorList>
    </citation>
    <scope>INTERACTION WITH STXBP6</scope>
</reference>
<reference key="11">
    <citation type="journal article" date="2003" name="J. Biol. Chem.">
        <title>Ca2+-dependent phosphorylation of syntaxin-1A by the death-associated protein (DAP) kinase regulates its interaction with Munc18.</title>
        <authorList>
            <person name="Tian J.H."/>
            <person name="Das S."/>
            <person name="Sheng Z.H."/>
        </authorList>
    </citation>
    <scope>PHOSPHORYLATION AT SER-188</scope>
    <scope>INTERACTION WITH STXBP1</scope>
</reference>
<reference key="12">
    <citation type="journal article" date="2003" name="Neuron">
        <title>Regulating the conducting states of a mammalian serotonin transporter.</title>
        <authorList>
            <person name="Quick M.W."/>
        </authorList>
    </citation>
    <scope>INTERACTION WITH SLC6A4</scope>
</reference>
<reference key="13">
    <citation type="journal article" date="2004" name="J. Biol. Chem.">
        <title>A transient N-terminal interaction of SNAP-25 and syntaxin nucleates SNARE assembly.</title>
        <authorList>
            <person name="Fasshauer D."/>
            <person name="Margittai M."/>
        </authorList>
    </citation>
    <scope>FUNCTION</scope>
    <scope>INTERACTION WITH VAMP2 AND SNAP25</scope>
</reference>
<reference key="14">
    <citation type="journal article" date="2006" name="Science">
        <title>N- to C-terminal SNARE complex assembly promotes rapid membrane fusion.</title>
        <authorList>
            <person name="Pobbati A.V."/>
            <person name="Stein A."/>
            <person name="Fasshauer D."/>
        </authorList>
    </citation>
    <scope>FUNCTION</scope>
    <scope>INTERACTION WITH VAMP2 AND SNAP25</scope>
</reference>
<reference key="15">
    <citation type="journal article" date="2007" name="J. Neurosci.">
        <title>K+ channel facilitation of exocytosis by dynamic interaction with syntaxin.</title>
        <authorList>
            <person name="Singer-Lahat D."/>
            <person name="Sheinin A."/>
            <person name="Chikvashvili D."/>
            <person name="Tsuk S."/>
            <person name="Greitzer D."/>
            <person name="Friedrich R."/>
            <person name="Feinshreiber L."/>
            <person name="Ashery U."/>
            <person name="Benveniste M."/>
            <person name="Levitan E.S."/>
            <person name="Lotan I."/>
        </authorList>
    </citation>
    <scope>FUNCTION</scope>
    <scope>INTERACTION WITH KCNB1</scope>
    <scope>SUBCELLULAR LOCATION</scope>
</reference>
<reference key="16">
    <citation type="journal article" date="2008" name="PLoS ONE">
        <title>Direct interaction of endogenous Kv channels with syntaxin enhances exocytosis by neuroendocrine cells.</title>
        <authorList>
            <person name="Singer-Lahat D."/>
            <person name="Chikvashvili D."/>
            <person name="Lotan I."/>
        </authorList>
    </citation>
    <scope>FUNCTION</scope>
    <scope>INTERACTION WITH KCNB1</scope>
    <scope>SUBCELLULAR LOCATION</scope>
</reference>
<reference key="17">
    <citation type="journal article" date="2009" name="J. Neurochem.">
        <title>Sept8 controls the binding of vesicle-associated membrane protein 2 to synaptophysin.</title>
        <authorList>
            <person name="Ito H."/>
            <person name="Atsuzawa K."/>
            <person name="Morishita R."/>
            <person name="Usuda N."/>
            <person name="Sudo K."/>
            <person name="Iwamoto I."/>
            <person name="Mizutani K."/>
            <person name="Katoh-Semba R."/>
            <person name="Nozawa Y."/>
            <person name="Asano T."/>
            <person name="Nagata K."/>
        </authorList>
    </citation>
    <scope>INTERACTION WITH VAMP2 AND SEPT8</scope>
</reference>
<reference key="18">
    <citation type="journal article" date="2010" name="J. Cell Sci.">
        <title>Non-conducting function of the Kv2.1 channel enables it to recruit vesicles for release in neuroendocrine and nerve cells.</title>
        <authorList>
            <person name="Feinshreiber L."/>
            <person name="Singer-Lahat D."/>
            <person name="Friedrich R."/>
            <person name="Matti U."/>
            <person name="Sheinin A."/>
            <person name="Yizhar O."/>
            <person name="Nachman R."/>
            <person name="Chikvashvili D."/>
            <person name="Rettig J."/>
            <person name="Ashery U."/>
            <person name="Lotan I."/>
        </authorList>
    </citation>
    <scope>FUNCTION</scope>
    <scope>INTERACTION WITH KCNB1</scope>
    <scope>SUBCELLULAR LOCATION</scope>
</reference>
<reference key="19">
    <citation type="journal article" date="2012" name="Diabetologia">
        <title>The voltage-dependent potassium channel subunit Kv2.1 regulates insulin secretion from rodent and human islets independently of its electrical function.</title>
        <authorList>
            <person name="Dai X.Q."/>
            <person name="Manning Fox J.E."/>
            <person name="Chikvashvili D."/>
            <person name="Casimir M."/>
            <person name="Plummer G."/>
            <person name="Hajmrle C."/>
            <person name="Spigelman A.F."/>
            <person name="Kin T."/>
            <person name="Singer-Lahat D."/>
            <person name="Kang Y."/>
            <person name="Shapiro A.M."/>
            <person name="Gaisano H.Y."/>
            <person name="Lotan I."/>
            <person name="Macdonald P.E."/>
        </authorList>
    </citation>
    <scope>FUNCTION</scope>
    <scope>INTERACTION WITH KCNB1</scope>
    <scope>SUBCELLULAR LOCATION</scope>
</reference>
<reference key="20">
    <citation type="journal article" date="2012" name="Nat. Commun.">
        <title>Quantitative maps of protein phosphorylation sites across 14 different rat organs and tissues.</title>
        <authorList>
            <person name="Lundby A."/>
            <person name="Secher A."/>
            <person name="Lage K."/>
            <person name="Nordsborg N.B."/>
            <person name="Dmytriyev A."/>
            <person name="Lundby C."/>
            <person name="Olsen J.V."/>
        </authorList>
    </citation>
    <scope>PHOSPHORYLATION [LARGE SCALE ANALYSIS] AT SER-14; SER-64 AND SER-95</scope>
    <scope>IDENTIFICATION BY MASS SPECTROMETRY [LARGE SCALE ANALYSIS]</scope>
</reference>
<reference key="21">
    <citation type="journal article" date="2013" name="J. Biol. Chem.">
        <title>PRIP (phospholipase C-related but catalytically inactive protein) inhibits exocytosis by direct interactions with syntaxin 1 and SNAP-25 through its C2 domain.</title>
        <authorList>
            <person name="Zhang Z."/>
            <person name="Takeuchi H."/>
            <person name="Gao J."/>
            <person name="Wang D."/>
            <person name="James D.J."/>
            <person name="Martin T.F."/>
            <person name="Hirata M."/>
        </authorList>
    </citation>
    <scope>INTERACTION WITH PLCL1</scope>
    <scope>SUBCELLULAR LOCATION</scope>
</reference>
<reference key="22">
    <citation type="journal article" date="1998" name="Nature">
        <title>Crystal structure of a SNARE complex involved in synaptic exocytosis at 2.4 A resolution.</title>
        <authorList>
            <person name="Sutton R.B."/>
            <person name="Fasshauer D."/>
            <person name="Jahn R."/>
            <person name="Brunger A.T."/>
        </authorList>
    </citation>
    <scope>X-RAY CRYSTALLOGRAPHY (2.4 ANGSTROMS) OF 180-262 IN COMPLEX WITH SNAP25 AND VAMP2</scope>
</reference>
<reference key="23">
    <citation type="journal article" date="2000" name="Biochemistry">
        <title>Structural analysis of the neuronal SNARE protein syntaxin-1A.</title>
        <authorList>
            <person name="Lerman J.C."/>
            <person name="Robblee J."/>
            <person name="Fairman R."/>
            <person name="Hughson F.M."/>
        </authorList>
    </citation>
    <scope>X-RAY CRYSTALLOGRAPHY (1.9 ANGSTROMS) OF 24-150</scope>
</reference>
<reference key="24">
    <citation type="journal article" date="2000" name="Nature">
        <title>Three-dimensional structure of the neuronal-Sec1-syntaxin 1a complex.</title>
        <authorList>
            <person name="Misura K.M.S."/>
            <person name="Scheller R.H."/>
            <person name="Weis W.I."/>
        </authorList>
    </citation>
    <scope>X-RAY CRYSTALLOGRAPHY (2.6 ANGSTROMS) OF 27-248 IN COMPLEX WITH STXBP1</scope>
</reference>
<reference key="25">
    <citation type="journal article" date="2001" name="J. Biol. Chem.">
        <title>Self-association of the H3 region of syntaxin 1A. Implications for intermediates in SNARE complex assembly.</title>
        <authorList>
            <person name="Misura K.M.S."/>
            <person name="Scheller R.H."/>
            <person name="Weis W.I."/>
        </authorList>
    </citation>
    <scope>X-RAY CRYSTALLOGRAPHY (2.4 ANGSTROMS) OF 191-267</scope>
</reference>
<reference key="26">
    <citation type="journal article" date="2001" name="J. Biol. Chem.">
        <title>Crystal structure and biophysical properties of a complex between the N-terminal SNARE region of SNAP25 and syntaxin 1a.</title>
        <authorList>
            <person name="Misura K.M.S."/>
            <person name="Gonzalez L.C. Jr."/>
            <person name="May A.P."/>
            <person name="Scheller R.H."/>
            <person name="Weis W.I."/>
        </authorList>
    </citation>
    <scope>X-RAY CRYSTALLOGRAPHY (2.0 ANGSTROMS) OF 191-267 IN COMPLEX WITH SNAP25</scope>
</reference>
<reference key="27">
    <citation type="journal article" date="2002" name="Neuron">
        <title>Three-dimensional structure of the complexin/SNARE complex.</title>
        <authorList>
            <person name="Chen X."/>
            <person name="Tomchick D.R."/>
            <person name="Kovrigin E."/>
            <person name="Arac D."/>
            <person name="Machius M."/>
            <person name="Suedhof T.C."/>
            <person name="Rizo J."/>
        </authorList>
    </citation>
    <scope>X-RAY CRYSTALLOGRAPHY (2.3 ANGSTROMS) OF 191-253 IN COMPLEX WITH CPLX1; SNAP25 AND VAMP2</scope>
    <scope>STRUCTURE BY NMR</scope>
</reference>
<reference key="28">
    <citation type="journal article" date="2003" name="J. Biol. Chem.">
        <title>High resolution structure, stability, and synaptotagmin binding of a truncated neuronal SNARE complex.</title>
        <authorList>
            <person name="Ernst J.A."/>
            <person name="Brunger A.T."/>
        </authorList>
    </citation>
    <scope>X-RAY CRYSTALLOGRAPHY (1.45 ANGSTROMS) OF 191-256 IN COMPLEX WITH SNAP25 AND VAMP2</scope>
</reference>
<reference key="29">
    <citation type="journal article" date="1998" name="Cell">
        <title>Three-dimensional structure of an evolutionarily conserved N-terminal domain of syntaxin 1A.</title>
        <authorList>
            <person name="Fernandez I."/>
            <person name="Ubach J."/>
            <person name="Dulubova I."/>
            <person name="Zhang X."/>
            <person name="Suedhof T.C."/>
            <person name="Rizo J."/>
        </authorList>
    </citation>
    <scope>STRUCTURE BY NMR OF 27-146</scope>
</reference>
<reference key="30">
    <citation type="journal article" date="2008" name="EMBO J.">
        <title>Munc18a controls SNARE assembly through its interaction with the syntaxin N-peptide.</title>
        <authorList>
            <person name="Burkhardt P."/>
            <person name="Hattendorf D.A."/>
            <person name="Weis W.I."/>
            <person name="Fasshauer D."/>
        </authorList>
    </citation>
    <scope>X-RAY CRYSTALLOGRAPHY (2.60 ANGSTROMS) OF 1-267 IN COMPLEX WITH STXBP1 AND SNAP25</scope>
</reference>
<reference key="31">
    <citation type="journal article" date="2009" name="Nature">
        <title>Helical extension of the neuronal SNARE complex into the membrane.</title>
        <authorList>
            <person name="Stein A."/>
            <person name="Weber G."/>
            <person name="Wahl M.C."/>
            <person name="Jahn R."/>
        </authorList>
    </citation>
    <scope>X-RAY CRYSTALLOGRAPHY (3.40 ANGSTROMS) OF 183-288 IN COMPLEX WITH SNAP25 AND VAMP2</scope>
    <scope>FUNCTION</scope>
</reference>
<reference key="32">
    <citation type="journal article" date="2011" name="Nat. Struct. Mol. Biol.">
        <title>Complexin cross-links prefusion SNAREs into a zigzag array.</title>
        <authorList>
            <person name="Kummel D."/>
            <person name="Krishnakumar S.S."/>
            <person name="Radoff D.T."/>
            <person name="Li F."/>
            <person name="Giraudo C.G."/>
            <person name="Pincet F."/>
            <person name="Rothman J.E."/>
            <person name="Reinisch K.M."/>
        </authorList>
    </citation>
    <scope>X-RAY CRYSTALLOGRAPHY (2.20 ANGSTROMS) OF 191-253 IN COMPLEX WITH HUMAN CPLX1; SNAP25 AND VAMP2</scope>
</reference>
<reference key="33">
    <citation type="journal article" date="2015" name="Nature">
        <title>Architecture of the synaptotagmin-SNARE machinery for neuronal exocytosis.</title>
        <authorList>
            <person name="Zhou Q."/>
            <person name="Lai Y."/>
            <person name="Bacaj T."/>
            <person name="Zhao M."/>
            <person name="Lyubimov A.Y."/>
            <person name="Uervirojnangkoorn M."/>
            <person name="Zeldin O.B."/>
            <person name="Brewster A.S."/>
            <person name="Sauter N.K."/>
            <person name="Cohen A.E."/>
            <person name="Soltis S.M."/>
            <person name="Alonso-Mori R."/>
            <person name="Chollet M."/>
            <person name="Lemke H.T."/>
            <person name="Pfuetzner R.A."/>
            <person name="Choi U.B."/>
            <person name="Weis W.I."/>
            <person name="Diao J."/>
            <person name="Suedhof T.C."/>
            <person name="Brunger A.T."/>
        </authorList>
    </citation>
    <scope>X-RAY CRYSTALLOGRAPHY (3.50 ANGSTROMS) OF 191-256</scope>
    <scope>INTERACTION WITH SYT1; SNAP25 AND VAMP2</scope>
</reference>
<reference key="34">
    <citation type="journal article" date="2017" name="Nature">
        <title>The primed SNARE-complexin-synaptotagmin complex for neuronal exocytosis.</title>
        <authorList>
            <person name="Zhou Q."/>
            <person name="Zhou P."/>
            <person name="Wang A.L."/>
            <person name="Wu D."/>
            <person name="Zhao M."/>
            <person name="Suedhof T.C."/>
            <person name="Brunger A.T."/>
        </authorList>
    </citation>
    <scope>X-RAY CRYSTALLOGRAPHY (1.85 ANGSTROMS) OF 190-256</scope>
    <scope>INTERACTION WITH SYT1; CPLX1; VAMP2 AND SNAP25</scope>
    <scope>FUNCTION</scope>
</reference>
<proteinExistence type="evidence at protein level"/>